<organism>
    <name type="scientific">Burkholderia mallei (strain ATCC 23344)</name>
    <dbReference type="NCBI Taxonomy" id="243160"/>
    <lineage>
        <taxon>Bacteria</taxon>
        <taxon>Pseudomonadati</taxon>
        <taxon>Pseudomonadota</taxon>
        <taxon>Betaproteobacteria</taxon>
        <taxon>Burkholderiales</taxon>
        <taxon>Burkholderiaceae</taxon>
        <taxon>Burkholderia</taxon>
        <taxon>pseudomallei group</taxon>
    </lineage>
</organism>
<evidence type="ECO:0000255" key="1">
    <source>
        <dbReference type="HAMAP-Rule" id="MF_02007"/>
    </source>
</evidence>
<feature type="chain" id="PRO_0000236700" description="Tyrosine--tRNA ligase">
    <location>
        <begin position="1"/>
        <end position="413"/>
    </location>
</feature>
<feature type="domain" description="S4 RNA-binding" evidence="1">
    <location>
        <begin position="351"/>
        <end position="411"/>
    </location>
</feature>
<feature type="short sequence motif" description="'HIGH' region">
    <location>
        <begin position="59"/>
        <end position="68"/>
    </location>
</feature>
<feature type="short sequence motif" description="'KMSKS' region">
    <location>
        <begin position="243"/>
        <end position="247"/>
    </location>
</feature>
<feature type="binding site" evidence="1">
    <location>
        <position position="246"/>
    </location>
    <ligand>
        <name>ATP</name>
        <dbReference type="ChEBI" id="CHEBI:30616"/>
    </ligand>
</feature>
<gene>
    <name evidence="1" type="primary">tyrS</name>
    <name type="ordered locus">BMA2348</name>
</gene>
<comment type="function">
    <text evidence="1">Catalyzes the attachment of tyrosine to tRNA(Tyr) in a two-step reaction: tyrosine is first activated by ATP to form Tyr-AMP and then transferred to the acceptor end of tRNA(Tyr).</text>
</comment>
<comment type="catalytic activity">
    <reaction evidence="1">
        <text>tRNA(Tyr) + L-tyrosine + ATP = L-tyrosyl-tRNA(Tyr) + AMP + diphosphate + H(+)</text>
        <dbReference type="Rhea" id="RHEA:10220"/>
        <dbReference type="Rhea" id="RHEA-COMP:9706"/>
        <dbReference type="Rhea" id="RHEA-COMP:9707"/>
        <dbReference type="ChEBI" id="CHEBI:15378"/>
        <dbReference type="ChEBI" id="CHEBI:30616"/>
        <dbReference type="ChEBI" id="CHEBI:33019"/>
        <dbReference type="ChEBI" id="CHEBI:58315"/>
        <dbReference type="ChEBI" id="CHEBI:78442"/>
        <dbReference type="ChEBI" id="CHEBI:78536"/>
        <dbReference type="ChEBI" id="CHEBI:456215"/>
        <dbReference type="EC" id="6.1.1.1"/>
    </reaction>
</comment>
<comment type="subunit">
    <text evidence="1">Homodimer.</text>
</comment>
<comment type="subcellular location">
    <subcellularLocation>
        <location evidence="1">Cytoplasm</location>
    </subcellularLocation>
</comment>
<comment type="similarity">
    <text evidence="1">Belongs to the class-I aminoacyl-tRNA synthetase family. TyrS type 2 subfamily.</text>
</comment>
<proteinExistence type="inferred from homology"/>
<reference key="1">
    <citation type="journal article" date="2004" name="Proc. Natl. Acad. Sci. U.S.A.">
        <title>Structural flexibility in the Burkholderia mallei genome.</title>
        <authorList>
            <person name="Nierman W.C."/>
            <person name="DeShazer D."/>
            <person name="Kim H.S."/>
            <person name="Tettelin H."/>
            <person name="Nelson K.E."/>
            <person name="Feldblyum T.V."/>
            <person name="Ulrich R.L."/>
            <person name="Ronning C.M."/>
            <person name="Brinkac L.M."/>
            <person name="Daugherty S.C."/>
            <person name="Davidsen T.D."/>
            <person name="DeBoy R.T."/>
            <person name="Dimitrov G."/>
            <person name="Dodson R.J."/>
            <person name="Durkin A.S."/>
            <person name="Gwinn M.L."/>
            <person name="Haft D.H."/>
            <person name="Khouri H.M."/>
            <person name="Kolonay J.F."/>
            <person name="Madupu R."/>
            <person name="Mohammoud Y."/>
            <person name="Nelson W.C."/>
            <person name="Radune D."/>
            <person name="Romero C.M."/>
            <person name="Sarria S."/>
            <person name="Selengut J."/>
            <person name="Shamblin C."/>
            <person name="Sullivan S.A."/>
            <person name="White O."/>
            <person name="Yu Y."/>
            <person name="Zafar N."/>
            <person name="Zhou L."/>
            <person name="Fraser C.M."/>
        </authorList>
    </citation>
    <scope>NUCLEOTIDE SEQUENCE [LARGE SCALE GENOMIC DNA]</scope>
    <source>
        <strain>ATCC 23344</strain>
    </source>
</reference>
<accession>Q62HB4</accession>
<name>SYY_BURMA</name>
<dbReference type="EC" id="6.1.1.1" evidence="1"/>
<dbReference type="EMBL" id="CP000010">
    <property type="protein sequence ID" value="AAU50221.1"/>
    <property type="molecule type" value="Genomic_DNA"/>
</dbReference>
<dbReference type="RefSeq" id="WP_004194043.1">
    <property type="nucleotide sequence ID" value="NC_006348.1"/>
</dbReference>
<dbReference type="RefSeq" id="YP_103906.1">
    <property type="nucleotide sequence ID" value="NC_006348.1"/>
</dbReference>
<dbReference type="SMR" id="Q62HB4"/>
<dbReference type="GeneID" id="92980042"/>
<dbReference type="KEGG" id="bma:BMA2348"/>
<dbReference type="PATRIC" id="fig|243160.12.peg.2419"/>
<dbReference type="eggNOG" id="COG0162">
    <property type="taxonomic scope" value="Bacteria"/>
</dbReference>
<dbReference type="HOGENOM" id="CLU_024003_5_0_4"/>
<dbReference type="Proteomes" id="UP000006693">
    <property type="component" value="Chromosome 1"/>
</dbReference>
<dbReference type="GO" id="GO:0005829">
    <property type="term" value="C:cytosol"/>
    <property type="evidence" value="ECO:0007669"/>
    <property type="project" value="TreeGrafter"/>
</dbReference>
<dbReference type="GO" id="GO:0005524">
    <property type="term" value="F:ATP binding"/>
    <property type="evidence" value="ECO:0007669"/>
    <property type="project" value="UniProtKB-UniRule"/>
</dbReference>
<dbReference type="GO" id="GO:0003723">
    <property type="term" value="F:RNA binding"/>
    <property type="evidence" value="ECO:0007669"/>
    <property type="project" value="UniProtKB-KW"/>
</dbReference>
<dbReference type="GO" id="GO:0004831">
    <property type="term" value="F:tyrosine-tRNA ligase activity"/>
    <property type="evidence" value="ECO:0007669"/>
    <property type="project" value="UniProtKB-UniRule"/>
</dbReference>
<dbReference type="GO" id="GO:0006437">
    <property type="term" value="P:tyrosyl-tRNA aminoacylation"/>
    <property type="evidence" value="ECO:0007669"/>
    <property type="project" value="UniProtKB-UniRule"/>
</dbReference>
<dbReference type="CDD" id="cd00165">
    <property type="entry name" value="S4"/>
    <property type="match status" value="1"/>
</dbReference>
<dbReference type="CDD" id="cd00805">
    <property type="entry name" value="TyrRS_core"/>
    <property type="match status" value="1"/>
</dbReference>
<dbReference type="FunFam" id="1.10.240.10:FF:000006">
    <property type="entry name" value="Tyrosine--tRNA ligase"/>
    <property type="match status" value="1"/>
</dbReference>
<dbReference type="FunFam" id="3.10.290.10:FF:000022">
    <property type="entry name" value="Tyrosine--tRNA ligase"/>
    <property type="match status" value="1"/>
</dbReference>
<dbReference type="FunFam" id="3.40.50.620:FF:000061">
    <property type="entry name" value="Tyrosine--tRNA ligase"/>
    <property type="match status" value="1"/>
</dbReference>
<dbReference type="Gene3D" id="3.40.50.620">
    <property type="entry name" value="HUPs"/>
    <property type="match status" value="1"/>
</dbReference>
<dbReference type="Gene3D" id="3.10.290.10">
    <property type="entry name" value="RNA-binding S4 domain"/>
    <property type="match status" value="1"/>
</dbReference>
<dbReference type="Gene3D" id="1.10.240.10">
    <property type="entry name" value="Tyrosyl-Transfer RNA Synthetase"/>
    <property type="match status" value="1"/>
</dbReference>
<dbReference type="HAMAP" id="MF_02007">
    <property type="entry name" value="Tyr_tRNA_synth_type2"/>
    <property type="match status" value="1"/>
</dbReference>
<dbReference type="InterPro" id="IPR001412">
    <property type="entry name" value="aa-tRNA-synth_I_CS"/>
</dbReference>
<dbReference type="InterPro" id="IPR002305">
    <property type="entry name" value="aa-tRNA-synth_Ic"/>
</dbReference>
<dbReference type="InterPro" id="IPR014729">
    <property type="entry name" value="Rossmann-like_a/b/a_fold"/>
</dbReference>
<dbReference type="InterPro" id="IPR002942">
    <property type="entry name" value="S4_RNA-bd"/>
</dbReference>
<dbReference type="InterPro" id="IPR036986">
    <property type="entry name" value="S4_RNA-bd_sf"/>
</dbReference>
<dbReference type="InterPro" id="IPR002307">
    <property type="entry name" value="Tyr-tRNA-ligase"/>
</dbReference>
<dbReference type="InterPro" id="IPR024088">
    <property type="entry name" value="Tyr-tRNA-ligase_bac-type"/>
</dbReference>
<dbReference type="InterPro" id="IPR024108">
    <property type="entry name" value="Tyr-tRNA-ligase_bac_2"/>
</dbReference>
<dbReference type="NCBIfam" id="TIGR00234">
    <property type="entry name" value="tyrS"/>
    <property type="match status" value="1"/>
</dbReference>
<dbReference type="PANTHER" id="PTHR11766:SF1">
    <property type="entry name" value="TYROSINE--TRNA LIGASE"/>
    <property type="match status" value="1"/>
</dbReference>
<dbReference type="PANTHER" id="PTHR11766">
    <property type="entry name" value="TYROSYL-TRNA SYNTHETASE"/>
    <property type="match status" value="1"/>
</dbReference>
<dbReference type="Pfam" id="PF01479">
    <property type="entry name" value="S4"/>
    <property type="match status" value="1"/>
</dbReference>
<dbReference type="Pfam" id="PF00579">
    <property type="entry name" value="tRNA-synt_1b"/>
    <property type="match status" value="1"/>
</dbReference>
<dbReference type="PRINTS" id="PR01040">
    <property type="entry name" value="TRNASYNTHTYR"/>
</dbReference>
<dbReference type="SMART" id="SM00363">
    <property type="entry name" value="S4"/>
    <property type="match status" value="1"/>
</dbReference>
<dbReference type="SUPFAM" id="SSF55174">
    <property type="entry name" value="Alpha-L RNA-binding motif"/>
    <property type="match status" value="1"/>
</dbReference>
<dbReference type="SUPFAM" id="SSF52374">
    <property type="entry name" value="Nucleotidylyl transferase"/>
    <property type="match status" value="1"/>
</dbReference>
<dbReference type="PROSITE" id="PS00178">
    <property type="entry name" value="AA_TRNA_LIGASE_I"/>
    <property type="match status" value="1"/>
</dbReference>
<dbReference type="PROSITE" id="PS50889">
    <property type="entry name" value="S4"/>
    <property type="match status" value="1"/>
</dbReference>
<protein>
    <recommendedName>
        <fullName evidence="1">Tyrosine--tRNA ligase</fullName>
        <ecNumber evidence="1">6.1.1.1</ecNumber>
    </recommendedName>
    <alternativeName>
        <fullName evidence="1">Tyrosyl-tRNA synthetase</fullName>
        <shortName evidence="1">TyrRS</shortName>
    </alternativeName>
</protein>
<keyword id="KW-0030">Aminoacyl-tRNA synthetase</keyword>
<keyword id="KW-0067">ATP-binding</keyword>
<keyword id="KW-0963">Cytoplasm</keyword>
<keyword id="KW-0436">Ligase</keyword>
<keyword id="KW-0547">Nucleotide-binding</keyword>
<keyword id="KW-0648">Protein biosynthesis</keyword>
<keyword id="KW-1185">Reference proteome</keyword>
<keyword id="KW-0694">RNA-binding</keyword>
<sequence>MSTDPTSKPAFPITDEVRHALAVTKRGVDELLIEEEFAQKLAKSAATGKPLRIKLGLDPTAPDIHLGHTVVLNKMRQLQDLGHTVIFLIGDFTSLIGDPSGRNATRPPLTREQIESNAKTYFEQAALVLDREKTEIRYNSEWSMPLGADGMIKLASRYTVARMLEREDFTKRFQGGIPISIHEFLYPLMQGYDSVALNADLELGGTDQKFNLLVGRELQKQYGQEQQCILTMPLLEGLDGVEKMSKSKGNYVGISEKPTDMFGKLMSISDVLMWRYFELLSFRSLDEIARFRGEAEGGRNPRDFKVMLAQEIVARFHSQADAERALEDFNHRAKGGVPDDIPAVTLAGAPLAIGQLLKQAGLVPSTSEALRNIEQGGVKIDGATVSDKALKVDAGEFVVQVGKRRFARVTLTA</sequence>